<keyword id="KW-0285">Flavoprotein</keyword>
<keyword id="KW-0288">FMN</keyword>
<keyword id="KW-0560">Oxidoreductase</keyword>
<keyword id="KW-0664">Pyridoxine biosynthesis</keyword>
<keyword id="KW-1185">Reference proteome</keyword>
<comment type="function">
    <text evidence="1">Catalyzes the oxidation of either pyridoxine 5'-phosphate (PNP) or pyridoxamine 5'-phosphate (PMP) into pyridoxal 5'-phosphate (PLP).</text>
</comment>
<comment type="catalytic activity">
    <reaction evidence="1">
        <text>pyridoxamine 5'-phosphate + O2 + H2O = pyridoxal 5'-phosphate + H2O2 + NH4(+)</text>
        <dbReference type="Rhea" id="RHEA:15817"/>
        <dbReference type="ChEBI" id="CHEBI:15377"/>
        <dbReference type="ChEBI" id="CHEBI:15379"/>
        <dbReference type="ChEBI" id="CHEBI:16240"/>
        <dbReference type="ChEBI" id="CHEBI:28938"/>
        <dbReference type="ChEBI" id="CHEBI:58451"/>
        <dbReference type="ChEBI" id="CHEBI:597326"/>
        <dbReference type="EC" id="1.4.3.5"/>
    </reaction>
</comment>
<comment type="catalytic activity">
    <reaction evidence="1">
        <text>pyridoxine 5'-phosphate + O2 = pyridoxal 5'-phosphate + H2O2</text>
        <dbReference type="Rhea" id="RHEA:15149"/>
        <dbReference type="ChEBI" id="CHEBI:15379"/>
        <dbReference type="ChEBI" id="CHEBI:16240"/>
        <dbReference type="ChEBI" id="CHEBI:58589"/>
        <dbReference type="ChEBI" id="CHEBI:597326"/>
        <dbReference type="EC" id="1.4.3.5"/>
    </reaction>
</comment>
<comment type="cofactor">
    <cofactor evidence="1">
        <name>FMN</name>
        <dbReference type="ChEBI" id="CHEBI:58210"/>
    </cofactor>
    <text evidence="1">Binds 1 FMN per subunit.</text>
</comment>
<comment type="pathway">
    <text evidence="1">Cofactor metabolism; pyridoxal 5'-phosphate salvage; pyridoxal 5'-phosphate from pyridoxamine 5'-phosphate: step 1/1.</text>
</comment>
<comment type="pathway">
    <text evidence="1">Cofactor metabolism; pyridoxal 5'-phosphate salvage; pyridoxal 5'-phosphate from pyridoxine 5'-phosphate: step 1/1.</text>
</comment>
<comment type="subunit">
    <text evidence="1">Homodimer.</text>
</comment>
<comment type="similarity">
    <text evidence="1">Belongs to the pyridoxamine 5'-phosphate oxidase family.</text>
</comment>
<accession>Q82GN9</accession>
<organism>
    <name type="scientific">Streptomyces avermitilis (strain ATCC 31267 / DSM 46492 / JCM 5070 / NBRC 14893 / NCIMB 12804 / NRRL 8165 / MA-4680)</name>
    <dbReference type="NCBI Taxonomy" id="227882"/>
    <lineage>
        <taxon>Bacteria</taxon>
        <taxon>Bacillati</taxon>
        <taxon>Actinomycetota</taxon>
        <taxon>Actinomycetes</taxon>
        <taxon>Kitasatosporales</taxon>
        <taxon>Streptomycetaceae</taxon>
        <taxon>Streptomyces</taxon>
    </lineage>
</organism>
<sequence>MTDRDPIHDPAAMREHYRLEGLDETELAAHPMDQFTRWFAQAAQAAAQGVVYEPNAMVVSTADADGRPSSRTVLMKQYDEQGFVFYTNYDSRKARDLAANPYVSLLFPWHPMARQVVVTGLARRTGRDETAAYFRTRPHGSQLGAWASAQSSVIFSRAELDAAYEQLGVRYPEGEQVPVPPNWGGFRIAPQTVEFWQGRWNRLHDRLRYVAEPDGSWRVERLSP</sequence>
<proteinExistence type="inferred from homology"/>
<dbReference type="EC" id="1.4.3.5" evidence="1"/>
<dbReference type="EMBL" id="BA000030">
    <property type="protein sequence ID" value="BAC71570.1"/>
    <property type="molecule type" value="Genomic_DNA"/>
</dbReference>
<dbReference type="RefSeq" id="WP_010985289.1">
    <property type="nucleotide sequence ID" value="NZ_JZJK01000090.1"/>
</dbReference>
<dbReference type="SMR" id="Q82GN9"/>
<dbReference type="GeneID" id="41540927"/>
<dbReference type="KEGG" id="sma:SAVERM_3858"/>
<dbReference type="eggNOG" id="COG0259">
    <property type="taxonomic scope" value="Bacteria"/>
</dbReference>
<dbReference type="HOGENOM" id="CLU_032263_2_2_11"/>
<dbReference type="OrthoDB" id="9780392at2"/>
<dbReference type="UniPathway" id="UPA01068">
    <property type="reaction ID" value="UER00304"/>
</dbReference>
<dbReference type="UniPathway" id="UPA01068">
    <property type="reaction ID" value="UER00305"/>
</dbReference>
<dbReference type="Proteomes" id="UP000000428">
    <property type="component" value="Chromosome"/>
</dbReference>
<dbReference type="GO" id="GO:0010181">
    <property type="term" value="F:FMN binding"/>
    <property type="evidence" value="ECO:0007669"/>
    <property type="project" value="UniProtKB-UniRule"/>
</dbReference>
<dbReference type="GO" id="GO:0004733">
    <property type="term" value="F:pyridoxamine phosphate oxidase activity"/>
    <property type="evidence" value="ECO:0007669"/>
    <property type="project" value="UniProtKB-UniRule"/>
</dbReference>
<dbReference type="GO" id="GO:0008615">
    <property type="term" value="P:pyridoxine biosynthetic process"/>
    <property type="evidence" value="ECO:0007669"/>
    <property type="project" value="UniProtKB-KW"/>
</dbReference>
<dbReference type="Gene3D" id="2.30.110.10">
    <property type="entry name" value="Electron Transport, Fmn-binding Protein, Chain A"/>
    <property type="match status" value="1"/>
</dbReference>
<dbReference type="HAMAP" id="MF_01629">
    <property type="entry name" value="PdxH"/>
    <property type="match status" value="1"/>
</dbReference>
<dbReference type="InterPro" id="IPR000659">
    <property type="entry name" value="Pyridox_Oxase"/>
</dbReference>
<dbReference type="InterPro" id="IPR019740">
    <property type="entry name" value="Pyridox_Oxase_CS"/>
</dbReference>
<dbReference type="InterPro" id="IPR011576">
    <property type="entry name" value="Pyridox_Oxase_N"/>
</dbReference>
<dbReference type="InterPro" id="IPR019576">
    <property type="entry name" value="Pyridoxamine_oxidase_dimer_C"/>
</dbReference>
<dbReference type="InterPro" id="IPR012349">
    <property type="entry name" value="Split_barrel_FMN-bd"/>
</dbReference>
<dbReference type="NCBIfam" id="TIGR00558">
    <property type="entry name" value="pdxH"/>
    <property type="match status" value="1"/>
</dbReference>
<dbReference type="NCBIfam" id="NF004231">
    <property type="entry name" value="PRK05679.1"/>
    <property type="match status" value="1"/>
</dbReference>
<dbReference type="PANTHER" id="PTHR10851:SF0">
    <property type="entry name" value="PYRIDOXINE-5'-PHOSPHATE OXIDASE"/>
    <property type="match status" value="1"/>
</dbReference>
<dbReference type="PANTHER" id="PTHR10851">
    <property type="entry name" value="PYRIDOXINE-5-PHOSPHATE OXIDASE"/>
    <property type="match status" value="1"/>
</dbReference>
<dbReference type="Pfam" id="PF10590">
    <property type="entry name" value="PNP_phzG_C"/>
    <property type="match status" value="1"/>
</dbReference>
<dbReference type="Pfam" id="PF01243">
    <property type="entry name" value="PNPOx_N"/>
    <property type="match status" value="1"/>
</dbReference>
<dbReference type="PIRSF" id="PIRSF000190">
    <property type="entry name" value="Pyd_amn-ph_oxd"/>
    <property type="match status" value="1"/>
</dbReference>
<dbReference type="SUPFAM" id="SSF50475">
    <property type="entry name" value="FMN-binding split barrel"/>
    <property type="match status" value="1"/>
</dbReference>
<dbReference type="PROSITE" id="PS01064">
    <property type="entry name" value="PYRIDOX_OXIDASE"/>
    <property type="match status" value="1"/>
</dbReference>
<feature type="chain" id="PRO_0000167760" description="Pyridoxine/pyridoxamine 5'-phosphate oxidase">
    <location>
        <begin position="1"/>
        <end position="224"/>
    </location>
</feature>
<feature type="binding site" evidence="1">
    <location>
        <begin position="14"/>
        <end position="17"/>
    </location>
    <ligand>
        <name>substrate</name>
    </ligand>
</feature>
<feature type="binding site" evidence="1">
    <location>
        <begin position="71"/>
        <end position="76"/>
    </location>
    <ligand>
        <name>FMN</name>
        <dbReference type="ChEBI" id="CHEBI:58210"/>
    </ligand>
</feature>
<feature type="binding site" evidence="1">
    <location>
        <position position="76"/>
    </location>
    <ligand>
        <name>substrate</name>
    </ligand>
</feature>
<feature type="binding site" evidence="1">
    <location>
        <begin position="86"/>
        <end position="87"/>
    </location>
    <ligand>
        <name>FMN</name>
        <dbReference type="ChEBI" id="CHEBI:58210"/>
    </ligand>
</feature>
<feature type="binding site" evidence="1">
    <location>
        <position position="92"/>
    </location>
    <ligand>
        <name>FMN</name>
        <dbReference type="ChEBI" id="CHEBI:58210"/>
    </ligand>
</feature>
<feature type="binding site" evidence="1">
    <location>
        <position position="93"/>
    </location>
    <ligand>
        <name>FMN</name>
        <dbReference type="ChEBI" id="CHEBI:58210"/>
    </ligand>
</feature>
<feature type="binding site" evidence="1">
    <location>
        <position position="115"/>
    </location>
    <ligand>
        <name>FMN</name>
        <dbReference type="ChEBI" id="CHEBI:58210"/>
    </ligand>
</feature>
<feature type="binding site" evidence="1">
    <location>
        <position position="133"/>
    </location>
    <ligand>
        <name>substrate</name>
    </ligand>
</feature>
<feature type="binding site" evidence="1">
    <location>
        <position position="137"/>
    </location>
    <ligand>
        <name>substrate</name>
    </ligand>
</feature>
<feature type="binding site" evidence="1">
    <location>
        <position position="141"/>
    </location>
    <ligand>
        <name>substrate</name>
    </ligand>
</feature>
<feature type="binding site" evidence="1">
    <location>
        <begin position="150"/>
        <end position="151"/>
    </location>
    <ligand>
        <name>FMN</name>
        <dbReference type="ChEBI" id="CHEBI:58210"/>
    </ligand>
</feature>
<feature type="binding site" evidence="1">
    <location>
        <position position="196"/>
    </location>
    <ligand>
        <name>FMN</name>
        <dbReference type="ChEBI" id="CHEBI:58210"/>
    </ligand>
</feature>
<feature type="binding site" evidence="1">
    <location>
        <begin position="202"/>
        <end position="204"/>
    </location>
    <ligand>
        <name>substrate</name>
    </ligand>
</feature>
<feature type="binding site" evidence="1">
    <location>
        <position position="206"/>
    </location>
    <ligand>
        <name>FMN</name>
        <dbReference type="ChEBI" id="CHEBI:58210"/>
    </ligand>
</feature>
<reference key="1">
    <citation type="journal article" date="2001" name="Proc. Natl. Acad. Sci. U.S.A.">
        <title>Genome sequence of an industrial microorganism Streptomyces avermitilis: deducing the ability of producing secondary metabolites.</title>
        <authorList>
            <person name="Omura S."/>
            <person name="Ikeda H."/>
            <person name="Ishikawa J."/>
            <person name="Hanamoto A."/>
            <person name="Takahashi C."/>
            <person name="Shinose M."/>
            <person name="Takahashi Y."/>
            <person name="Horikawa H."/>
            <person name="Nakazawa H."/>
            <person name="Osonoe T."/>
            <person name="Kikuchi H."/>
            <person name="Shiba T."/>
            <person name="Sakaki Y."/>
            <person name="Hattori M."/>
        </authorList>
    </citation>
    <scope>NUCLEOTIDE SEQUENCE [LARGE SCALE GENOMIC DNA]</scope>
    <source>
        <strain>ATCC 31267 / DSM 46492 / JCM 5070 / NBRC 14893 / NCIMB 12804 / NRRL 8165 / MA-4680</strain>
    </source>
</reference>
<reference key="2">
    <citation type="journal article" date="2003" name="Nat. Biotechnol.">
        <title>Complete genome sequence and comparative analysis of the industrial microorganism Streptomyces avermitilis.</title>
        <authorList>
            <person name="Ikeda H."/>
            <person name="Ishikawa J."/>
            <person name="Hanamoto A."/>
            <person name="Shinose M."/>
            <person name="Kikuchi H."/>
            <person name="Shiba T."/>
            <person name="Sakaki Y."/>
            <person name="Hattori M."/>
            <person name="Omura S."/>
        </authorList>
    </citation>
    <scope>NUCLEOTIDE SEQUENCE [LARGE SCALE GENOMIC DNA]</scope>
    <source>
        <strain>ATCC 31267 / DSM 46492 / JCM 5070 / NBRC 14893 / NCIMB 12804 / NRRL 8165 / MA-4680</strain>
    </source>
</reference>
<name>PDXH_STRAW</name>
<protein>
    <recommendedName>
        <fullName evidence="1">Pyridoxine/pyridoxamine 5'-phosphate oxidase</fullName>
        <ecNumber evidence="1">1.4.3.5</ecNumber>
    </recommendedName>
    <alternativeName>
        <fullName evidence="1">PNP/PMP oxidase</fullName>
        <shortName evidence="1">PNPOx</shortName>
    </alternativeName>
    <alternativeName>
        <fullName evidence="1">Pyridoxal 5'-phosphate synthase</fullName>
    </alternativeName>
</protein>
<evidence type="ECO:0000255" key="1">
    <source>
        <dbReference type="HAMAP-Rule" id="MF_01629"/>
    </source>
</evidence>
<gene>
    <name evidence="1" type="primary">pdxH</name>
    <name type="ordered locus">SAV_3858</name>
</gene>